<protein>
    <recommendedName>
        <fullName evidence="2">Purine nucleoside phosphorylase DeoD-type</fullName>
        <shortName evidence="2">PNP</shortName>
        <ecNumber evidence="2">2.4.2.1</ecNumber>
    </recommendedName>
</protein>
<name>DEOD_SALEP</name>
<evidence type="ECO:0000250" key="1">
    <source>
        <dbReference type="UniProtKB" id="P50389"/>
    </source>
</evidence>
<evidence type="ECO:0000255" key="2">
    <source>
        <dbReference type="HAMAP-Rule" id="MF_01627"/>
    </source>
</evidence>
<reference key="1">
    <citation type="journal article" date="2008" name="Genome Res.">
        <title>Comparative genome analysis of Salmonella enteritidis PT4 and Salmonella gallinarum 287/91 provides insights into evolutionary and host adaptation pathways.</title>
        <authorList>
            <person name="Thomson N.R."/>
            <person name="Clayton D.J."/>
            <person name="Windhorst D."/>
            <person name="Vernikos G."/>
            <person name="Davidson S."/>
            <person name="Churcher C."/>
            <person name="Quail M.A."/>
            <person name="Stevens M."/>
            <person name="Jones M.A."/>
            <person name="Watson M."/>
            <person name="Barron A."/>
            <person name="Layton A."/>
            <person name="Pickard D."/>
            <person name="Kingsley R.A."/>
            <person name="Bignell A."/>
            <person name="Clark L."/>
            <person name="Harris B."/>
            <person name="Ormond D."/>
            <person name="Abdellah Z."/>
            <person name="Brooks K."/>
            <person name="Cherevach I."/>
            <person name="Chillingworth T."/>
            <person name="Woodward J."/>
            <person name="Norberczak H."/>
            <person name="Lord A."/>
            <person name="Arrowsmith C."/>
            <person name="Jagels K."/>
            <person name="Moule S."/>
            <person name="Mungall K."/>
            <person name="Saunders M."/>
            <person name="Whitehead S."/>
            <person name="Chabalgoity J.A."/>
            <person name="Maskell D."/>
            <person name="Humphreys T."/>
            <person name="Roberts M."/>
            <person name="Barrow P.A."/>
            <person name="Dougan G."/>
            <person name="Parkhill J."/>
        </authorList>
    </citation>
    <scope>NUCLEOTIDE SEQUENCE [LARGE SCALE GENOMIC DNA]</scope>
    <source>
        <strain>P125109</strain>
    </source>
</reference>
<proteinExistence type="inferred from homology"/>
<gene>
    <name evidence="2" type="primary">deoD</name>
    <name type="ordered locus">SEN4331</name>
</gene>
<dbReference type="EC" id="2.4.2.1" evidence="2"/>
<dbReference type="EMBL" id="AM933172">
    <property type="protein sequence ID" value="CAR35883.1"/>
    <property type="molecule type" value="Genomic_DNA"/>
</dbReference>
<dbReference type="RefSeq" id="WP_000224865.1">
    <property type="nucleotide sequence ID" value="NC_011294.1"/>
</dbReference>
<dbReference type="SMR" id="B5R2J9"/>
<dbReference type="KEGG" id="set:SEN4331"/>
<dbReference type="HOGENOM" id="CLU_068457_2_0_6"/>
<dbReference type="Proteomes" id="UP000000613">
    <property type="component" value="Chromosome"/>
</dbReference>
<dbReference type="GO" id="GO:0005829">
    <property type="term" value="C:cytosol"/>
    <property type="evidence" value="ECO:0007669"/>
    <property type="project" value="TreeGrafter"/>
</dbReference>
<dbReference type="GO" id="GO:0004731">
    <property type="term" value="F:purine-nucleoside phosphorylase activity"/>
    <property type="evidence" value="ECO:0007669"/>
    <property type="project" value="UniProtKB-UniRule"/>
</dbReference>
<dbReference type="GO" id="GO:0006152">
    <property type="term" value="P:purine nucleoside catabolic process"/>
    <property type="evidence" value="ECO:0007669"/>
    <property type="project" value="TreeGrafter"/>
</dbReference>
<dbReference type="CDD" id="cd09006">
    <property type="entry name" value="PNP_EcPNPI-like"/>
    <property type="match status" value="1"/>
</dbReference>
<dbReference type="FunFam" id="3.40.50.1580:FF:000002">
    <property type="entry name" value="Purine nucleoside phosphorylase DeoD-type"/>
    <property type="match status" value="1"/>
</dbReference>
<dbReference type="Gene3D" id="3.40.50.1580">
    <property type="entry name" value="Nucleoside phosphorylase domain"/>
    <property type="match status" value="1"/>
</dbReference>
<dbReference type="HAMAP" id="MF_01627">
    <property type="entry name" value="Pur_nucleosid_phosp"/>
    <property type="match status" value="1"/>
</dbReference>
<dbReference type="InterPro" id="IPR004402">
    <property type="entry name" value="DeoD-type"/>
</dbReference>
<dbReference type="InterPro" id="IPR018016">
    <property type="entry name" value="Nucleoside_phosphorylase_CS"/>
</dbReference>
<dbReference type="InterPro" id="IPR000845">
    <property type="entry name" value="Nucleoside_phosphorylase_d"/>
</dbReference>
<dbReference type="InterPro" id="IPR035994">
    <property type="entry name" value="Nucleoside_phosphorylase_sf"/>
</dbReference>
<dbReference type="NCBIfam" id="TIGR00107">
    <property type="entry name" value="deoD"/>
    <property type="match status" value="1"/>
</dbReference>
<dbReference type="NCBIfam" id="NF004489">
    <property type="entry name" value="PRK05819.1"/>
    <property type="match status" value="1"/>
</dbReference>
<dbReference type="NCBIfam" id="NF009914">
    <property type="entry name" value="PRK13374.1"/>
    <property type="match status" value="1"/>
</dbReference>
<dbReference type="PANTHER" id="PTHR43691:SF2">
    <property type="entry name" value="PURINE NUCLEOSIDE PHOSPHORYLASE DEOD-TYPE"/>
    <property type="match status" value="1"/>
</dbReference>
<dbReference type="PANTHER" id="PTHR43691">
    <property type="entry name" value="URIDINE PHOSPHORYLASE"/>
    <property type="match status" value="1"/>
</dbReference>
<dbReference type="Pfam" id="PF01048">
    <property type="entry name" value="PNP_UDP_1"/>
    <property type="match status" value="1"/>
</dbReference>
<dbReference type="SUPFAM" id="SSF53167">
    <property type="entry name" value="Purine and uridine phosphorylases"/>
    <property type="match status" value="1"/>
</dbReference>
<dbReference type="PROSITE" id="PS01232">
    <property type="entry name" value="PNP_UDP_1"/>
    <property type="match status" value="1"/>
</dbReference>
<accession>B5R2J9</accession>
<feature type="chain" id="PRO_1000186216" description="Purine nucleoside phosphorylase DeoD-type">
    <location>
        <begin position="1"/>
        <end position="239"/>
    </location>
</feature>
<feature type="active site" description="Proton donor" evidence="2">
    <location>
        <position position="205"/>
    </location>
</feature>
<feature type="binding site" evidence="1">
    <location>
        <position position="5"/>
    </location>
    <ligand>
        <name>a purine D-ribonucleoside</name>
        <dbReference type="ChEBI" id="CHEBI:142355"/>
        <note>ligand shared between dimeric partners</note>
    </ligand>
</feature>
<feature type="binding site" description="in other chain" evidence="1">
    <location>
        <position position="21"/>
    </location>
    <ligand>
        <name>phosphate</name>
        <dbReference type="ChEBI" id="CHEBI:43474"/>
        <note>ligand shared between dimeric partners</note>
    </ligand>
</feature>
<feature type="binding site" description="in other chain" evidence="1">
    <location>
        <position position="25"/>
    </location>
    <ligand>
        <name>phosphate</name>
        <dbReference type="ChEBI" id="CHEBI:43474"/>
        <note>ligand shared between dimeric partners</note>
    </ligand>
</feature>
<feature type="binding site" evidence="1">
    <location>
        <position position="44"/>
    </location>
    <ligand>
        <name>phosphate</name>
        <dbReference type="ChEBI" id="CHEBI:43474"/>
        <note>ligand shared between dimeric partners</note>
    </ligand>
</feature>
<feature type="binding site" description="in other chain" evidence="1">
    <location>
        <begin position="88"/>
        <end position="91"/>
    </location>
    <ligand>
        <name>phosphate</name>
        <dbReference type="ChEBI" id="CHEBI:43474"/>
        <note>ligand shared between dimeric partners</note>
    </ligand>
</feature>
<feature type="binding site" description="in other chain" evidence="1">
    <location>
        <begin position="180"/>
        <end position="182"/>
    </location>
    <ligand>
        <name>a purine D-ribonucleoside</name>
        <dbReference type="ChEBI" id="CHEBI:142355"/>
        <note>ligand shared between dimeric partners</note>
    </ligand>
</feature>
<feature type="binding site" description="in other chain" evidence="1">
    <location>
        <begin position="204"/>
        <end position="205"/>
    </location>
    <ligand>
        <name>a purine D-ribonucleoside</name>
        <dbReference type="ChEBI" id="CHEBI:142355"/>
        <note>ligand shared between dimeric partners</note>
    </ligand>
</feature>
<feature type="site" description="Important for catalytic activity" evidence="2">
    <location>
        <position position="218"/>
    </location>
</feature>
<sequence>MATPHINAEMGDFADVVLMPGDPLRAKHIAETFLEDVREVNNVRGMLGFTGTYKGRKISVMGHGMGIPSCSIYTKELITDFGVKKIIRVGSCGAVRMDVKLRDVVIGMGACTDSKVNRIRFKDHDFAAIADFDMVRNAVDAAKALGVDARVGNLFSADLFYSPDGEMFDVMEKYGVLGVEMEAAGIYGVAAEFGAKALTICTVSDHIRTHEQTTAAERQTTFNDMIKIALESVLLGDQE</sequence>
<organism>
    <name type="scientific">Salmonella enteritidis PT4 (strain P125109)</name>
    <dbReference type="NCBI Taxonomy" id="550537"/>
    <lineage>
        <taxon>Bacteria</taxon>
        <taxon>Pseudomonadati</taxon>
        <taxon>Pseudomonadota</taxon>
        <taxon>Gammaproteobacteria</taxon>
        <taxon>Enterobacterales</taxon>
        <taxon>Enterobacteriaceae</taxon>
        <taxon>Salmonella</taxon>
    </lineage>
</organism>
<comment type="function">
    <text evidence="2">Catalyzes the reversible phosphorolytic breakdown of the N-glycosidic bond in the beta-(deoxy)ribonucleoside molecules, with the formation of the corresponding free purine bases and pentose-1-phosphate.</text>
</comment>
<comment type="catalytic activity">
    <reaction evidence="2">
        <text>a purine D-ribonucleoside + phosphate = a purine nucleobase + alpha-D-ribose 1-phosphate</text>
        <dbReference type="Rhea" id="RHEA:19805"/>
        <dbReference type="ChEBI" id="CHEBI:26386"/>
        <dbReference type="ChEBI" id="CHEBI:43474"/>
        <dbReference type="ChEBI" id="CHEBI:57720"/>
        <dbReference type="ChEBI" id="CHEBI:142355"/>
        <dbReference type="EC" id="2.4.2.1"/>
    </reaction>
</comment>
<comment type="catalytic activity">
    <reaction evidence="2">
        <text>a purine 2'-deoxy-D-ribonucleoside + phosphate = a purine nucleobase + 2-deoxy-alpha-D-ribose 1-phosphate</text>
        <dbReference type="Rhea" id="RHEA:36431"/>
        <dbReference type="ChEBI" id="CHEBI:26386"/>
        <dbReference type="ChEBI" id="CHEBI:43474"/>
        <dbReference type="ChEBI" id="CHEBI:57259"/>
        <dbReference type="ChEBI" id="CHEBI:142361"/>
        <dbReference type="EC" id="2.4.2.1"/>
    </reaction>
</comment>
<comment type="subunit">
    <text evidence="2">Homohexamer; trimer of homodimers.</text>
</comment>
<comment type="similarity">
    <text evidence="2">Belongs to the PNP/UDP phosphorylase family.</text>
</comment>
<keyword id="KW-0328">Glycosyltransferase</keyword>
<keyword id="KW-0808">Transferase</keyword>